<keyword id="KW-0067">ATP-binding</keyword>
<keyword id="KW-0227">DNA damage</keyword>
<keyword id="KW-0234">DNA repair</keyword>
<keyword id="KW-0238">DNA-binding</keyword>
<keyword id="KW-0547">Nucleotide-binding</keyword>
<organism>
    <name type="scientific">Exiguobacterium sp. (strain ATCC BAA-1283 / AT1b)</name>
    <dbReference type="NCBI Taxonomy" id="360911"/>
    <lineage>
        <taxon>Bacteria</taxon>
        <taxon>Bacillati</taxon>
        <taxon>Bacillota</taxon>
        <taxon>Bacilli</taxon>
        <taxon>Bacillales</taxon>
        <taxon>Bacillales Family XII. Incertae Sedis</taxon>
        <taxon>Exiguobacterium</taxon>
    </lineage>
</organism>
<reference key="1">
    <citation type="journal article" date="2011" name="J. Bacteriol.">
        <title>Complete genome sequence of the Thermophilic Bacterium Exiguobacterium sp. AT1b.</title>
        <authorList>
            <person name="Vishnivetskaya T.A."/>
            <person name="Lucas S."/>
            <person name="Copeland A."/>
            <person name="Lapidus A."/>
            <person name="Glavina del Rio T."/>
            <person name="Dalin E."/>
            <person name="Tice H."/>
            <person name="Bruce D.C."/>
            <person name="Goodwin L.A."/>
            <person name="Pitluck S."/>
            <person name="Saunders E."/>
            <person name="Brettin T."/>
            <person name="Detter C."/>
            <person name="Han C."/>
            <person name="Larimer F."/>
            <person name="Land M.L."/>
            <person name="Hauser L.J."/>
            <person name="Kyrpides N.C."/>
            <person name="Ovchinnikova G."/>
            <person name="Kathariou S."/>
            <person name="Ramaley R.F."/>
            <person name="Rodrigues D.F."/>
            <person name="Hendrix C."/>
            <person name="Richardson P."/>
            <person name="Tiedje J.M."/>
        </authorList>
    </citation>
    <scope>NUCLEOTIDE SEQUENCE [LARGE SCALE GENOMIC DNA]</scope>
    <source>
        <strain>ATCC BAA-1283 / AT1b</strain>
    </source>
</reference>
<dbReference type="EMBL" id="CP001615">
    <property type="protein sequence ID" value="ACQ69037.1"/>
    <property type="molecule type" value="Genomic_DNA"/>
</dbReference>
<dbReference type="RefSeq" id="WP_012726156.1">
    <property type="nucleotide sequence ID" value="NC_012673.1"/>
</dbReference>
<dbReference type="SMR" id="C4L191"/>
<dbReference type="STRING" id="360911.EAT1b_0103"/>
<dbReference type="KEGG" id="eat:EAT1b_0103"/>
<dbReference type="eggNOG" id="COG0249">
    <property type="taxonomic scope" value="Bacteria"/>
</dbReference>
<dbReference type="HOGENOM" id="CLU_002472_3_1_9"/>
<dbReference type="OrthoDB" id="9802448at2"/>
<dbReference type="Proteomes" id="UP000000716">
    <property type="component" value="Chromosome"/>
</dbReference>
<dbReference type="GO" id="GO:0005829">
    <property type="term" value="C:cytosol"/>
    <property type="evidence" value="ECO:0007669"/>
    <property type="project" value="TreeGrafter"/>
</dbReference>
<dbReference type="GO" id="GO:0005524">
    <property type="term" value="F:ATP binding"/>
    <property type="evidence" value="ECO:0007669"/>
    <property type="project" value="UniProtKB-UniRule"/>
</dbReference>
<dbReference type="GO" id="GO:0140664">
    <property type="term" value="F:ATP-dependent DNA damage sensor activity"/>
    <property type="evidence" value="ECO:0007669"/>
    <property type="project" value="InterPro"/>
</dbReference>
<dbReference type="GO" id="GO:0003684">
    <property type="term" value="F:damaged DNA binding"/>
    <property type="evidence" value="ECO:0007669"/>
    <property type="project" value="UniProtKB-UniRule"/>
</dbReference>
<dbReference type="GO" id="GO:0030983">
    <property type="term" value="F:mismatched DNA binding"/>
    <property type="evidence" value="ECO:0007669"/>
    <property type="project" value="InterPro"/>
</dbReference>
<dbReference type="GO" id="GO:0006298">
    <property type="term" value="P:mismatch repair"/>
    <property type="evidence" value="ECO:0007669"/>
    <property type="project" value="UniProtKB-UniRule"/>
</dbReference>
<dbReference type="CDD" id="cd03284">
    <property type="entry name" value="ABC_MutS1"/>
    <property type="match status" value="1"/>
</dbReference>
<dbReference type="FunFam" id="1.10.1420.10:FF:000007">
    <property type="entry name" value="DNA mismatch repair protein MutS"/>
    <property type="match status" value="1"/>
</dbReference>
<dbReference type="FunFam" id="3.40.1170.10:FF:000001">
    <property type="entry name" value="DNA mismatch repair protein MutS"/>
    <property type="match status" value="1"/>
</dbReference>
<dbReference type="FunFam" id="3.40.50.300:FF:000870">
    <property type="entry name" value="MutS protein homolog 4"/>
    <property type="match status" value="1"/>
</dbReference>
<dbReference type="Gene3D" id="1.10.1420.10">
    <property type="match status" value="2"/>
</dbReference>
<dbReference type="Gene3D" id="3.40.1170.10">
    <property type="entry name" value="DNA repair protein MutS, domain I"/>
    <property type="match status" value="1"/>
</dbReference>
<dbReference type="Gene3D" id="3.30.420.110">
    <property type="entry name" value="MutS, connector domain"/>
    <property type="match status" value="1"/>
</dbReference>
<dbReference type="Gene3D" id="3.40.50.300">
    <property type="entry name" value="P-loop containing nucleotide triphosphate hydrolases"/>
    <property type="match status" value="1"/>
</dbReference>
<dbReference type="HAMAP" id="MF_00096">
    <property type="entry name" value="MutS"/>
    <property type="match status" value="1"/>
</dbReference>
<dbReference type="InterPro" id="IPR005748">
    <property type="entry name" value="DNA_mismatch_repair_MutS"/>
</dbReference>
<dbReference type="InterPro" id="IPR007695">
    <property type="entry name" value="DNA_mismatch_repair_MutS-lik_N"/>
</dbReference>
<dbReference type="InterPro" id="IPR017261">
    <property type="entry name" value="DNA_mismatch_repair_MutS/MSH"/>
</dbReference>
<dbReference type="InterPro" id="IPR000432">
    <property type="entry name" value="DNA_mismatch_repair_MutS_C"/>
</dbReference>
<dbReference type="InterPro" id="IPR007861">
    <property type="entry name" value="DNA_mismatch_repair_MutS_clamp"/>
</dbReference>
<dbReference type="InterPro" id="IPR007696">
    <property type="entry name" value="DNA_mismatch_repair_MutS_core"/>
</dbReference>
<dbReference type="InterPro" id="IPR016151">
    <property type="entry name" value="DNA_mismatch_repair_MutS_N"/>
</dbReference>
<dbReference type="InterPro" id="IPR036187">
    <property type="entry name" value="DNA_mismatch_repair_MutS_sf"/>
</dbReference>
<dbReference type="InterPro" id="IPR007860">
    <property type="entry name" value="DNA_mmatch_repair_MutS_con_dom"/>
</dbReference>
<dbReference type="InterPro" id="IPR045076">
    <property type="entry name" value="MutS"/>
</dbReference>
<dbReference type="InterPro" id="IPR036678">
    <property type="entry name" value="MutS_con_dom_sf"/>
</dbReference>
<dbReference type="InterPro" id="IPR027417">
    <property type="entry name" value="P-loop_NTPase"/>
</dbReference>
<dbReference type="NCBIfam" id="TIGR01070">
    <property type="entry name" value="mutS1"/>
    <property type="match status" value="1"/>
</dbReference>
<dbReference type="NCBIfam" id="NF003810">
    <property type="entry name" value="PRK05399.1"/>
    <property type="match status" value="1"/>
</dbReference>
<dbReference type="PANTHER" id="PTHR11361:SF34">
    <property type="entry name" value="DNA MISMATCH REPAIR PROTEIN MSH1, MITOCHONDRIAL"/>
    <property type="match status" value="1"/>
</dbReference>
<dbReference type="PANTHER" id="PTHR11361">
    <property type="entry name" value="DNA MISMATCH REPAIR PROTEIN MUTS FAMILY MEMBER"/>
    <property type="match status" value="1"/>
</dbReference>
<dbReference type="Pfam" id="PF01624">
    <property type="entry name" value="MutS_I"/>
    <property type="match status" value="1"/>
</dbReference>
<dbReference type="Pfam" id="PF05188">
    <property type="entry name" value="MutS_II"/>
    <property type="match status" value="1"/>
</dbReference>
<dbReference type="Pfam" id="PF05192">
    <property type="entry name" value="MutS_III"/>
    <property type="match status" value="1"/>
</dbReference>
<dbReference type="Pfam" id="PF05190">
    <property type="entry name" value="MutS_IV"/>
    <property type="match status" value="1"/>
</dbReference>
<dbReference type="Pfam" id="PF00488">
    <property type="entry name" value="MutS_V"/>
    <property type="match status" value="1"/>
</dbReference>
<dbReference type="PIRSF" id="PIRSF037677">
    <property type="entry name" value="DNA_mis_repair_Msh6"/>
    <property type="match status" value="1"/>
</dbReference>
<dbReference type="SMART" id="SM00534">
    <property type="entry name" value="MUTSac"/>
    <property type="match status" value="1"/>
</dbReference>
<dbReference type="SMART" id="SM00533">
    <property type="entry name" value="MUTSd"/>
    <property type="match status" value="1"/>
</dbReference>
<dbReference type="SUPFAM" id="SSF55271">
    <property type="entry name" value="DNA repair protein MutS, domain I"/>
    <property type="match status" value="1"/>
</dbReference>
<dbReference type="SUPFAM" id="SSF53150">
    <property type="entry name" value="DNA repair protein MutS, domain II"/>
    <property type="match status" value="1"/>
</dbReference>
<dbReference type="SUPFAM" id="SSF48334">
    <property type="entry name" value="DNA repair protein MutS, domain III"/>
    <property type="match status" value="1"/>
</dbReference>
<dbReference type="SUPFAM" id="SSF52540">
    <property type="entry name" value="P-loop containing nucleoside triphosphate hydrolases"/>
    <property type="match status" value="1"/>
</dbReference>
<dbReference type="PROSITE" id="PS00486">
    <property type="entry name" value="DNA_MISMATCH_REPAIR_2"/>
    <property type="match status" value="1"/>
</dbReference>
<name>MUTS_EXISA</name>
<sequence>MQEVHQTPMMKQYFSIKADYPDAFLFYRLGDFYELFFEDAQIVAKELELTLTSKNGKQAEHPIPMCGVPHHSAAIYIEQLIEKGFNVAICEQTEDPKATKGLVKREVIQVITPGTYMASLSEKENRYLVAISDVAGRFGIARGDVTTGESWLTTLSSEEAVLREIEGLLPNEVIVEDERLADLLRQTGIPLSIQVDKRESTLAQGAKDEAQRSAFELLFAYLTKTQKRSLDHLQPAVAYEVEQHMQLDANTARNLELFRSARSGERKGSLLSLLDETTTAMGGRLLKRWLEQPLYTEQGIRERQDAVENLVDDFMLRDQLQEELKRVYDIERLVAKVGYGTANARDLVQLRDTLERMPSVRSLLQTVKADRLQQIEQNLDSFETLSEQLRAALVDSPPISTKEGGMIRHGYSDELDELLEAKANGKSWIANLEQQERIATGIKSLKVGYNRVFGYYLEVTKANAKLLEEGRYERKQTLTNAERYITPELKEKEALILGAEEKSCTLEYDLFVALREEVKTYTKPLQQLARSLSELDVLLALAVVAEKREYVRPVTTSHVQIERGRHPVIETVLPRGEYVANDLTLDDTRQMLLITGPNMSGKSTYMRQFALIAILHQIGSFVPAEAAELPLFDRIFTRIGAADDLVSGQSTFMVEMTETRQAVTEATSNSLILLDEIGRGTSTYDGMALAQAIVEYIASSIGAKTLFSTHYHELTVLEDSIPSLENVHVRAIERDGRVVFLHEVHPGRADKSYGIHVAELAELPDSLIDRARTILSELESEATKPALNEQSAPPQVEEVSQLSLFESNDAVREQLLKLDLLAMNPIEAMQALYELQQTAKKG</sequence>
<proteinExistence type="inferred from homology"/>
<evidence type="ECO:0000255" key="1">
    <source>
        <dbReference type="HAMAP-Rule" id="MF_00096"/>
    </source>
</evidence>
<comment type="function">
    <text evidence="1">This protein is involved in the repair of mismatches in DNA. It is possible that it carries out the mismatch recognition step. This protein has a weak ATPase activity.</text>
</comment>
<comment type="similarity">
    <text evidence="1">Belongs to the DNA mismatch repair MutS family.</text>
</comment>
<accession>C4L191</accession>
<feature type="chain" id="PRO_1000202736" description="DNA mismatch repair protein MutS">
    <location>
        <begin position="1"/>
        <end position="842"/>
    </location>
</feature>
<feature type="binding site" evidence="1">
    <location>
        <begin position="596"/>
        <end position="603"/>
    </location>
    <ligand>
        <name>ATP</name>
        <dbReference type="ChEBI" id="CHEBI:30616"/>
    </ligand>
</feature>
<protein>
    <recommendedName>
        <fullName evidence="1">DNA mismatch repair protein MutS</fullName>
    </recommendedName>
</protein>
<gene>
    <name evidence="1" type="primary">mutS</name>
    <name type="ordered locus">EAT1b_0103</name>
</gene>